<name>PHAP_SYNY3</name>
<gene>
    <name evidence="3" type="primary">phaP</name>
    <name type="ordered locus">ssl2501</name>
</gene>
<comment type="function">
    <text evidence="1">A phasin, it attaches to the polyhydroxybutyrate (PHB) granule surface regulating the number and size of PHB granules within a cell. It probably also acts as a regulator affecting the biosynthetic activity of PHB synthase in vivo.</text>
</comment>
<comment type="pathway">
    <text evidence="1">Biopolymer metabolism; poly-(R)-3-hydroxybutanoate biosynthesis.</text>
</comment>
<comment type="subunit">
    <text evidence="7">Homotetramer.</text>
</comment>
<comment type="subcellular location">
    <subcellularLocation>
        <location evidence="6">Cellular thylakoid membrane</location>
        <topology evidence="6">Peripheral membrane protein</topology>
        <orientation evidence="6">Cytoplasmic side</orientation>
    </subcellularLocation>
    <subcellularLocation>
        <location evidence="1">Cytoplasm</location>
    </subcellularLocation>
    <text evidence="1 2">Distributed in cytoplasm during photoautotrophic growth, insoluble and associated with polyhydroxybutyrate (PHB) granules under nitrogen starvation (PubMed:25911471, PubMed:9683655).</text>
</comment>
<comment type="induction">
    <text evidence="1">Constitutively expressed, increasing levels as growth progresses (at protein level).</text>
</comment>
<comment type="domain">
    <text evidence="1">Probably has 2 alpha-helices (resides 3-26 and 39-83); both helices alone target to PHB granules, although helix 2 may be the main anchor. Both helices are required for oligomerization.</text>
</comment>
<comment type="disruption phenotype">
    <text evidence="1">During N(2) starvation fewer PHB granules accumulate per cell, while their diameter is increased by about 25% after 6 days of nitrogen starvation. Decreased rate of PHB synthesis, however overall accumulation of PHB is not significantly different.</text>
</comment>
<comment type="biotechnology">
    <text evidence="5">Poly(3-hydroxyalkanoic acids) (PHA), of which PHB is among the most common compounds, are prokaryotic intracellular storage compounds with potential uses as a renewable, biodegradable thermoplastic. Cyanobacterial PHB synthesis is particularly attractive as cyanobacteria use CO(2) as the carbon source.</text>
</comment>
<comment type="miscellaneous">
    <text evidence="7">Nitrogen-free medium induces chlorosis in Synechocystis, leading to the degradation of the photosynthetic apparatus and concomitant accumulation of cytoplasmic polyhydroxyalkanoic acid (PHA) granules which in this cyanobacterium are composed of PHB.</text>
</comment>
<dbReference type="EMBL" id="BA000022">
    <property type="protein sequence ID" value="BAA17585.1"/>
    <property type="molecule type" value="Genomic_DNA"/>
</dbReference>
<dbReference type="PIR" id="S77251">
    <property type="entry name" value="S77251"/>
</dbReference>
<dbReference type="SMR" id="P73545"/>
<dbReference type="STRING" id="1148.gene:10498452"/>
<dbReference type="PaxDb" id="1148-1652665"/>
<dbReference type="EnsemblBacteria" id="BAA17585">
    <property type="protein sequence ID" value="BAA17585"/>
    <property type="gene ID" value="BAA17585"/>
</dbReference>
<dbReference type="KEGG" id="syn:ssl2501"/>
<dbReference type="eggNOG" id="ENOG5032ZT5">
    <property type="taxonomic scope" value="Bacteria"/>
</dbReference>
<dbReference type="InParanoid" id="P73545"/>
<dbReference type="UniPathway" id="UPA00917"/>
<dbReference type="Proteomes" id="UP000001425">
    <property type="component" value="Chromosome"/>
</dbReference>
<dbReference type="GO" id="GO:0031676">
    <property type="term" value="C:plasma membrane-derived thylakoid membrane"/>
    <property type="evidence" value="ECO:0007669"/>
    <property type="project" value="UniProtKB-SubCell"/>
</dbReference>
<dbReference type="GO" id="GO:0070088">
    <property type="term" value="C:polyhydroxyalkanoate granule"/>
    <property type="evidence" value="ECO:0000314"/>
    <property type="project" value="UniProtKB"/>
</dbReference>
<dbReference type="GO" id="GO:0042619">
    <property type="term" value="P:poly-hydroxybutyrate biosynthetic process"/>
    <property type="evidence" value="ECO:0007669"/>
    <property type="project" value="UniProtKB-KW"/>
</dbReference>
<organism>
    <name type="scientific">Synechocystis sp. (strain ATCC 27184 / PCC 6803 / Kazusa)</name>
    <dbReference type="NCBI Taxonomy" id="1111708"/>
    <lineage>
        <taxon>Bacteria</taxon>
        <taxon>Bacillati</taxon>
        <taxon>Cyanobacteriota</taxon>
        <taxon>Cyanophyceae</taxon>
        <taxon>Synechococcales</taxon>
        <taxon>Merismopediaceae</taxon>
        <taxon>Synechocystis</taxon>
    </lineage>
</organism>
<keyword id="KW-0963">Cytoplasm</keyword>
<keyword id="KW-0903">Direct protein sequencing</keyword>
<keyword id="KW-0472">Membrane</keyword>
<keyword id="KW-0583">PHB biosynthesis</keyword>
<keyword id="KW-1185">Reference proteome</keyword>
<keyword id="KW-0793">Thylakoid</keyword>
<reference key="1">
    <citation type="journal article" date="1996" name="DNA Res.">
        <title>Sequence analysis of the genome of the unicellular cyanobacterium Synechocystis sp. strain PCC6803. II. Sequence determination of the entire genome and assignment of potential protein-coding regions.</title>
        <authorList>
            <person name="Kaneko T."/>
            <person name="Sato S."/>
            <person name="Kotani H."/>
            <person name="Tanaka A."/>
            <person name="Asamizu E."/>
            <person name="Nakamura Y."/>
            <person name="Miyajima N."/>
            <person name="Hirosawa M."/>
            <person name="Sugiura M."/>
            <person name="Sasamoto S."/>
            <person name="Kimura T."/>
            <person name="Hosouchi T."/>
            <person name="Matsuno A."/>
            <person name="Muraki A."/>
            <person name="Nakazaki N."/>
            <person name="Naruo K."/>
            <person name="Okumura S."/>
            <person name="Shimpo S."/>
            <person name="Takeuchi C."/>
            <person name="Wada T."/>
            <person name="Watanabe A."/>
            <person name="Yamada M."/>
            <person name="Yasuda M."/>
            <person name="Tabata S."/>
        </authorList>
    </citation>
    <scope>NUCLEOTIDE SEQUENCE [LARGE SCALE GENOMIC DNA]</scope>
    <source>
        <strain>ATCC 27184 / PCC 6803 / Kazusa</strain>
    </source>
</reference>
<reference key="2">
    <citation type="journal article" date="1998" name="Arch. Microbiol.">
        <title>Synechocystis sp. PCC6803 possesses a two-component polyhydroxyalkanoic acid synthase similar to that of anoxygenic purple sulfur bacteria.</title>
        <authorList>
            <person name="Hein S."/>
            <person name="Tran H."/>
            <person name="Steinbuechel A."/>
        </authorList>
    </citation>
    <scope>PROTEIN SEQUENCE OF 1-16</scope>
    <scope>SUBCELLULAR LOCATION</scope>
    <source>
        <strain>ATCC 27184 / PCC 6803 / N-1</strain>
    </source>
</reference>
<reference key="3">
    <citation type="journal article" date="2005" name="Proteomics">
        <title>Proteomic studies of the thylakoid membrane of Synechocystis sp. PCC 6803.</title>
        <authorList>
            <person name="Srivastava R."/>
            <person name="Pisareva T."/>
            <person name="Norling B."/>
        </authorList>
    </citation>
    <scope>SUBCELLULAR LOCATION IN THYLAKOID</scope>
</reference>
<reference key="4">
    <citation type="journal article" date="2015" name="Appl. Environ. Microbiol.">
        <title>Photoautotrophic polyhydroxybutyrate granule formation is regulated by cyanobacterial phasin PhaP in Synechocystis sp. strain PCC 6803.</title>
        <authorList>
            <person name="Hauf W."/>
            <person name="Watzer B."/>
            <person name="Roos N."/>
            <person name="Klotz A."/>
            <person name="Forchhammer K."/>
        </authorList>
    </citation>
    <scope>FUNCTION</scope>
    <scope>PATHWAY</scope>
    <scope>SUBUNIT</scope>
    <scope>SUBCELLULAR LOCATION</scope>
    <scope>INDUCTION</scope>
    <scope>DOMAIN</scope>
    <scope>DISRUPTION PHENOTYPE</scope>
    <source>
        <strain>ATCC 27184 / PCC 6803 / N-1</strain>
    </source>
</reference>
<proteinExistence type="evidence at protein level"/>
<protein>
    <recommendedName>
        <fullName evidence="3">Phasin PhaP</fullName>
    </recommendedName>
    <alternativeName>
        <fullName evidence="4">GA13</fullName>
    </alternativeName>
</protein>
<accession>P73545</accession>
<evidence type="ECO:0000269" key="1">
    <source>
    </source>
</evidence>
<evidence type="ECO:0000269" key="2">
    <source>
    </source>
</evidence>
<evidence type="ECO:0000303" key="3">
    <source>
    </source>
</evidence>
<evidence type="ECO:0000303" key="4">
    <source>
    </source>
</evidence>
<evidence type="ECO:0000305" key="5"/>
<evidence type="ECO:0000305" key="6">
    <source>
    </source>
</evidence>
<evidence type="ECO:0000305" key="7">
    <source>
    </source>
</evidence>
<feature type="chain" id="PRO_0000352746" description="Phasin PhaP">
    <location>
        <begin position="1"/>
        <end position="89"/>
    </location>
</feature>
<feature type="region of interest" description="Helix 1" evidence="7">
    <location>
        <begin position="3"/>
        <end position="26"/>
    </location>
</feature>
<feature type="region of interest" description="Helix 2" evidence="7">
    <location>
        <begin position="39"/>
        <end position="83"/>
    </location>
</feature>
<sequence>MNTQFFEEYQTQLLDWQKKFFSTWMESLPKGTAEIKLTDTFETSLKLQEEMVKSYLEAQEKSATMMIDAQKQFWDNYFQALRQEPVSAN</sequence>